<reference key="1">
    <citation type="journal article" date="1994" name="Gene">
        <title>Direct PCR sequencing of the ndd gene of bacteriophage T4: identification of a product involved in bacterial nucleoid disruption.</title>
        <authorList>
            <person name="Bouet J.-Y."/>
            <person name="Woszczyk J."/>
            <person name="Repoila F."/>
            <person name="Francois V."/>
            <person name="Louarn J.-M."/>
            <person name="Krisch H.M."/>
        </authorList>
    </citation>
    <scope>NUCLEOTIDE SEQUENCE</scope>
</reference>
<feature type="chain" id="PRO_0000164962" description="Nucleoid disruption protein">
    <location>
        <begin position="1"/>
        <end position="152"/>
    </location>
</feature>
<organism>
    <name type="scientific">Enterobacteria phage K3</name>
    <name type="common">Bacteriophage K3</name>
    <dbReference type="NCBI Taxonomy" id="10674"/>
    <lineage>
        <taxon>Viruses</taxon>
        <taxon>Duplodnaviria</taxon>
        <taxon>Heunggongvirae</taxon>
        <taxon>Uroviricota</taxon>
        <taxon>Caudoviricetes</taxon>
        <taxon>Straboviridae</taxon>
        <taxon>Tevenvirinae</taxon>
        <taxon>Tequatrovirus</taxon>
    </lineage>
</organism>
<name>NDD_BPK3</name>
<evidence type="ECO:0000250" key="1">
    <source>
        <dbReference type="UniProtKB" id="P15556"/>
    </source>
</evidence>
<organismHost>
    <name type="scientific">Escherichia coli</name>
    <dbReference type="NCBI Taxonomy" id="562"/>
</organismHost>
<gene>
    <name type="primary">ndd</name>
</gene>
<sequence>MKYMTVTDLNNAGATVIGTIKGGEWFLGTPHKDILSKPGFYFLVSKLDGRPFSNPCVSARFYVGNQRSKQGFSAVLSHIRQRRSQLARTIANNNVPYTVFYLPASKMKPLTTGFGKGQLALAFTRNHHSEYQTLEEMNRMLADNFKFVLQAY</sequence>
<dbReference type="GO" id="GO:0003677">
    <property type="term" value="F:DNA binding"/>
    <property type="evidence" value="ECO:0007669"/>
    <property type="project" value="UniProtKB-KW"/>
</dbReference>
<dbReference type="GO" id="GO:0044071">
    <property type="term" value="P:symbiont-mediated perturbation of host cell cycle progression"/>
    <property type="evidence" value="ECO:0007669"/>
    <property type="project" value="UniProtKB-KW"/>
</dbReference>
<dbReference type="GO" id="GO:0098673">
    <property type="term" value="P:symbiont-mediated suppression of host DNA replication"/>
    <property type="evidence" value="ECO:0007669"/>
    <property type="project" value="UniProtKB-KW"/>
</dbReference>
<dbReference type="InterPro" id="IPR009514">
    <property type="entry name" value="Phage_Ndd"/>
</dbReference>
<dbReference type="Pfam" id="PF06591">
    <property type="entry name" value="Phage_T4_Ndd"/>
    <property type="match status" value="1"/>
</dbReference>
<keyword id="KW-0238">DNA-binding</keyword>
<keyword id="KW-0945">Host-virus interaction</keyword>
<keyword id="KW-1248">Inhibition of host DNA replication by virus</keyword>
<keyword id="KW-1121">Modulation of host cell cycle by virus</keyword>
<comment type="function">
    <text evidence="1">Disorganizes the host nucleoid and inhibits replication, but without host DNA cleavage or degradation. Only the architecture of the nucleoid is affected. May act on the host chromosomal sequences that determine the structure of the nucleoid. Binds to dsDNA but not to ssDNA.</text>
</comment>
<proteinExistence type="inferred from homology"/>
<accession>P69191</accession>
<accession>P42266</accession>
<protein>
    <recommendedName>
        <fullName>Nucleoid disruption protein</fullName>
    </recommendedName>
    <alternativeName>
        <fullName>Nuclear disruption protein</fullName>
    </alternativeName>
</protein>